<reference key="1">
    <citation type="submission" date="2006-01" db="EMBL/GenBank/DDBJ databases">
        <title>Complete sequence of Novosphingobium aromaticivorans DSM 12444.</title>
        <authorList>
            <consortium name="US DOE Joint Genome Institute"/>
            <person name="Copeland A."/>
            <person name="Lucas S."/>
            <person name="Lapidus A."/>
            <person name="Barry K."/>
            <person name="Detter J.C."/>
            <person name="Glavina T."/>
            <person name="Hammon N."/>
            <person name="Israni S."/>
            <person name="Pitluck S."/>
            <person name="Chain P."/>
            <person name="Malfatti S."/>
            <person name="Shin M."/>
            <person name="Vergez L."/>
            <person name="Schmutz J."/>
            <person name="Larimer F."/>
            <person name="Land M."/>
            <person name="Kyrpides N."/>
            <person name="Ivanova N."/>
            <person name="Fredrickson J."/>
            <person name="Balkwill D."/>
            <person name="Romine M.F."/>
            <person name="Richardson P."/>
        </authorList>
    </citation>
    <scope>NUCLEOTIDE SEQUENCE [LARGE SCALE GENOMIC DNA]</scope>
    <source>
        <strain>ATCC 700278 / DSM 12444 / CCUG 56034 / CIP 105152 / NBRC 16084 / F199</strain>
    </source>
</reference>
<dbReference type="EMBL" id="CP000248">
    <property type="protein sequence ID" value="ABD25709.1"/>
    <property type="molecule type" value="Genomic_DNA"/>
</dbReference>
<dbReference type="RefSeq" id="WP_011444923.1">
    <property type="nucleotide sequence ID" value="NC_007794.1"/>
</dbReference>
<dbReference type="SMR" id="Q2G8W4"/>
<dbReference type="STRING" id="279238.Saro_1265"/>
<dbReference type="KEGG" id="nar:Saro_1265"/>
<dbReference type="eggNOG" id="COG0256">
    <property type="taxonomic scope" value="Bacteria"/>
</dbReference>
<dbReference type="HOGENOM" id="CLU_098841_0_1_5"/>
<dbReference type="Proteomes" id="UP000009134">
    <property type="component" value="Chromosome"/>
</dbReference>
<dbReference type="GO" id="GO:0005737">
    <property type="term" value="C:cytoplasm"/>
    <property type="evidence" value="ECO:0007669"/>
    <property type="project" value="UniProtKB-ARBA"/>
</dbReference>
<dbReference type="GO" id="GO:1990904">
    <property type="term" value="C:ribonucleoprotein complex"/>
    <property type="evidence" value="ECO:0007669"/>
    <property type="project" value="UniProtKB-KW"/>
</dbReference>
<dbReference type="GO" id="GO:0005840">
    <property type="term" value="C:ribosome"/>
    <property type="evidence" value="ECO:0007669"/>
    <property type="project" value="UniProtKB-KW"/>
</dbReference>
<dbReference type="GO" id="GO:0008097">
    <property type="term" value="F:5S rRNA binding"/>
    <property type="evidence" value="ECO:0007669"/>
    <property type="project" value="TreeGrafter"/>
</dbReference>
<dbReference type="GO" id="GO:0003735">
    <property type="term" value="F:structural constituent of ribosome"/>
    <property type="evidence" value="ECO:0007669"/>
    <property type="project" value="InterPro"/>
</dbReference>
<dbReference type="GO" id="GO:0006412">
    <property type="term" value="P:translation"/>
    <property type="evidence" value="ECO:0007669"/>
    <property type="project" value="UniProtKB-UniRule"/>
</dbReference>
<dbReference type="CDD" id="cd00432">
    <property type="entry name" value="Ribosomal_L18_L5e"/>
    <property type="match status" value="1"/>
</dbReference>
<dbReference type="FunFam" id="3.30.420.100:FF:000001">
    <property type="entry name" value="50S ribosomal protein L18"/>
    <property type="match status" value="1"/>
</dbReference>
<dbReference type="Gene3D" id="3.30.420.100">
    <property type="match status" value="1"/>
</dbReference>
<dbReference type="HAMAP" id="MF_01337_B">
    <property type="entry name" value="Ribosomal_uL18_B"/>
    <property type="match status" value="1"/>
</dbReference>
<dbReference type="InterPro" id="IPR004389">
    <property type="entry name" value="Ribosomal_uL18_bac-type"/>
</dbReference>
<dbReference type="InterPro" id="IPR005484">
    <property type="entry name" value="Ribosomal_uL18_bac/euk"/>
</dbReference>
<dbReference type="NCBIfam" id="TIGR00060">
    <property type="entry name" value="L18_bact"/>
    <property type="match status" value="1"/>
</dbReference>
<dbReference type="PANTHER" id="PTHR12899">
    <property type="entry name" value="39S RIBOSOMAL PROTEIN L18, MITOCHONDRIAL"/>
    <property type="match status" value="1"/>
</dbReference>
<dbReference type="PANTHER" id="PTHR12899:SF3">
    <property type="entry name" value="LARGE RIBOSOMAL SUBUNIT PROTEIN UL18M"/>
    <property type="match status" value="1"/>
</dbReference>
<dbReference type="Pfam" id="PF00861">
    <property type="entry name" value="Ribosomal_L18p"/>
    <property type="match status" value="1"/>
</dbReference>
<dbReference type="SUPFAM" id="SSF53137">
    <property type="entry name" value="Translational machinery components"/>
    <property type="match status" value="1"/>
</dbReference>
<feature type="chain" id="PRO_0000251338" description="Large ribosomal subunit protein uL18">
    <location>
        <begin position="1"/>
        <end position="116"/>
    </location>
</feature>
<evidence type="ECO:0000255" key="1">
    <source>
        <dbReference type="HAMAP-Rule" id="MF_01337"/>
    </source>
</evidence>
<evidence type="ECO:0000305" key="2"/>
<organism>
    <name type="scientific">Novosphingobium aromaticivorans (strain ATCC 700278 / DSM 12444 / CCUG 56034 / CIP 105152 / NBRC 16084 / F199)</name>
    <dbReference type="NCBI Taxonomy" id="279238"/>
    <lineage>
        <taxon>Bacteria</taxon>
        <taxon>Pseudomonadati</taxon>
        <taxon>Pseudomonadota</taxon>
        <taxon>Alphaproteobacteria</taxon>
        <taxon>Sphingomonadales</taxon>
        <taxon>Sphingomonadaceae</taxon>
        <taxon>Novosphingobium</taxon>
    </lineage>
</organism>
<sequence length="116" mass="12327">MAKLSLFERRRRRVRTALKARSGGRPRLSVHRSGRHIYAQIIDDAAGRTLAAASTLVKGDKSIGANVDAAAKVGAEIAEKAKAAGITTVVFDRGGFLFHGRVKALADAAREGGLEF</sequence>
<protein>
    <recommendedName>
        <fullName evidence="1">Large ribosomal subunit protein uL18</fullName>
    </recommendedName>
    <alternativeName>
        <fullName evidence="2">50S ribosomal protein L18</fullName>
    </alternativeName>
</protein>
<keyword id="KW-1185">Reference proteome</keyword>
<keyword id="KW-0687">Ribonucleoprotein</keyword>
<keyword id="KW-0689">Ribosomal protein</keyword>
<keyword id="KW-0694">RNA-binding</keyword>
<keyword id="KW-0699">rRNA-binding</keyword>
<gene>
    <name evidence="1" type="primary">rplR</name>
    <name type="ordered locus">Saro_1265</name>
</gene>
<comment type="function">
    <text evidence="1">This is one of the proteins that bind and probably mediate the attachment of the 5S RNA into the large ribosomal subunit, where it forms part of the central protuberance.</text>
</comment>
<comment type="subunit">
    <text evidence="1">Part of the 50S ribosomal subunit; part of the 5S rRNA/L5/L18/L25 subcomplex. Contacts the 5S and 23S rRNAs.</text>
</comment>
<comment type="similarity">
    <text evidence="1">Belongs to the universal ribosomal protein uL18 family.</text>
</comment>
<proteinExistence type="inferred from homology"/>
<accession>Q2G8W4</accession>
<name>RL18_NOVAD</name>